<reference key="1">
    <citation type="journal article" date="1998" name="Nature">
        <title>Deciphering the biology of Mycobacterium tuberculosis from the complete genome sequence.</title>
        <authorList>
            <person name="Cole S.T."/>
            <person name="Brosch R."/>
            <person name="Parkhill J."/>
            <person name="Garnier T."/>
            <person name="Churcher C.M."/>
            <person name="Harris D.E."/>
            <person name="Gordon S.V."/>
            <person name="Eiglmeier K."/>
            <person name="Gas S."/>
            <person name="Barry C.E. III"/>
            <person name="Tekaia F."/>
            <person name="Badcock K."/>
            <person name="Basham D."/>
            <person name="Brown D."/>
            <person name="Chillingworth T."/>
            <person name="Connor R."/>
            <person name="Davies R.M."/>
            <person name="Devlin K."/>
            <person name="Feltwell T."/>
            <person name="Gentles S."/>
            <person name="Hamlin N."/>
            <person name="Holroyd S."/>
            <person name="Hornsby T."/>
            <person name="Jagels K."/>
            <person name="Krogh A."/>
            <person name="McLean J."/>
            <person name="Moule S."/>
            <person name="Murphy L.D."/>
            <person name="Oliver S."/>
            <person name="Osborne J."/>
            <person name="Quail M.A."/>
            <person name="Rajandream M.A."/>
            <person name="Rogers J."/>
            <person name="Rutter S."/>
            <person name="Seeger K."/>
            <person name="Skelton S."/>
            <person name="Squares S."/>
            <person name="Squares R."/>
            <person name="Sulston J.E."/>
            <person name="Taylor K."/>
            <person name="Whitehead S."/>
            <person name="Barrell B.G."/>
        </authorList>
    </citation>
    <scope>NUCLEOTIDE SEQUENCE [LARGE SCALE GENOMIC DNA]</scope>
    <source>
        <strain>ATCC 25618 / H37Rv</strain>
    </source>
</reference>
<reference key="2">
    <citation type="journal article" date="2008" name="BMC Syst. Biol.">
        <title>targetTB: a target identification pipeline for Mycobacterium tuberculosis through an interactome, reactome and genome-scale structural analysis.</title>
        <authorList>
            <person name="Raman K."/>
            <person name="Yeturu K."/>
            <person name="Chandra N."/>
        </authorList>
    </citation>
    <scope>IDENTIFICATION AS A DRUG TARGET [LARGE SCALE ANALYSIS]</scope>
</reference>
<reference key="3">
    <citation type="journal article" date="2011" name="Mol. Cell. Proteomics">
        <title>Proteogenomic analysis of Mycobacterium tuberculosis by high resolution mass spectrometry.</title>
        <authorList>
            <person name="Kelkar D.S."/>
            <person name="Kumar D."/>
            <person name="Kumar P."/>
            <person name="Balakrishnan L."/>
            <person name="Muthusamy B."/>
            <person name="Yadav A.K."/>
            <person name="Shrivastava P."/>
            <person name="Marimuthu A."/>
            <person name="Anand S."/>
            <person name="Sundaram H."/>
            <person name="Kingsbury R."/>
            <person name="Harsha H.C."/>
            <person name="Nair B."/>
            <person name="Prasad T.S."/>
            <person name="Chauhan D.S."/>
            <person name="Katoch K."/>
            <person name="Katoch V.M."/>
            <person name="Kumar P."/>
            <person name="Chaerkady R."/>
            <person name="Ramachandran S."/>
            <person name="Dash D."/>
            <person name="Pandey A."/>
        </authorList>
    </citation>
    <scope>IDENTIFICATION BY MASS SPECTROMETRY [LARGE SCALE ANALYSIS]</scope>
    <source>
        <strain>ATCC 25618 / H37Rv</strain>
    </source>
</reference>
<gene>
    <name type="primary">trmD</name>
    <name type="ordered locus">Rv2906c</name>
    <name type="ORF">MTCY274.37c</name>
</gene>
<accession>P9WFY7</accession>
<accession>L0TDQ6</accession>
<accession>P66968</accession>
<accession>Q10797</accession>
<protein>
    <recommendedName>
        <fullName>tRNA (guanine-N(1)-)-methyltransferase</fullName>
        <ecNumber>2.1.1.228</ecNumber>
    </recommendedName>
    <alternativeName>
        <fullName>M1G-methyltransferase</fullName>
    </alternativeName>
    <alternativeName>
        <fullName>tRNA [GM37] methyltransferase</fullName>
    </alternativeName>
</protein>
<sequence>MRIDIVTIFPACLDPLRQSLPGKAIESGLVDLNVHDLRRWTHDVHHSVDDAPYGGGPGMVMKAPVWGEALDEICSSETLLIVPTPAGVLFTQATAQRWTTESHLVFACGRYEGIDQRVVQDAARRMRVEEVSIGDYVLPGGESAAVVMVEAVLRLLAGVLGNPASHQDDSHSTGLDGLLEGPSYTRPASWRGLDVPEVLLSGDHARIAAWRREVSLQRTRERRPDLSHPD</sequence>
<organism>
    <name type="scientific">Mycobacterium tuberculosis (strain ATCC 25618 / H37Rv)</name>
    <dbReference type="NCBI Taxonomy" id="83332"/>
    <lineage>
        <taxon>Bacteria</taxon>
        <taxon>Bacillati</taxon>
        <taxon>Actinomycetota</taxon>
        <taxon>Actinomycetes</taxon>
        <taxon>Mycobacteriales</taxon>
        <taxon>Mycobacteriaceae</taxon>
        <taxon>Mycobacterium</taxon>
        <taxon>Mycobacterium tuberculosis complex</taxon>
    </lineage>
</organism>
<dbReference type="EC" id="2.1.1.228"/>
<dbReference type="EMBL" id="AL123456">
    <property type="protein sequence ID" value="CCP45708.1"/>
    <property type="molecule type" value="Genomic_DNA"/>
</dbReference>
<dbReference type="PIR" id="E70927">
    <property type="entry name" value="E70927"/>
</dbReference>
<dbReference type="RefSeq" id="NP_217422.1">
    <property type="nucleotide sequence ID" value="NC_000962.3"/>
</dbReference>
<dbReference type="RefSeq" id="WP_003414722.1">
    <property type="nucleotide sequence ID" value="NZ_NVQJ01000006.1"/>
</dbReference>
<dbReference type="PDB" id="5ZHI">
    <property type="method" value="X-ray"/>
    <property type="resolution" value="2.20 A"/>
    <property type="chains" value="A/B=1-230"/>
</dbReference>
<dbReference type="PDB" id="5ZHJ">
    <property type="method" value="X-ray"/>
    <property type="resolution" value="1.75 A"/>
    <property type="chains" value="A=1-230"/>
</dbReference>
<dbReference type="PDB" id="5ZHK">
    <property type="method" value="X-ray"/>
    <property type="resolution" value="2.30 A"/>
    <property type="chains" value="A=1-230"/>
</dbReference>
<dbReference type="PDB" id="5ZHL">
    <property type="method" value="X-ray"/>
    <property type="resolution" value="2.25 A"/>
    <property type="chains" value="A=1-230"/>
</dbReference>
<dbReference type="PDB" id="6JOF">
    <property type="method" value="X-ray"/>
    <property type="resolution" value="2.20 A"/>
    <property type="chains" value="A=1-230"/>
</dbReference>
<dbReference type="PDBsum" id="5ZHI"/>
<dbReference type="PDBsum" id="5ZHJ"/>
<dbReference type="PDBsum" id="5ZHK"/>
<dbReference type="PDBsum" id="5ZHL"/>
<dbReference type="PDBsum" id="6JOF"/>
<dbReference type="SMR" id="P9WFY7"/>
<dbReference type="FunCoup" id="P9WFY7">
    <property type="interactions" value="140"/>
</dbReference>
<dbReference type="STRING" id="83332.Rv2906c"/>
<dbReference type="BindingDB" id="P9WFY7"/>
<dbReference type="ChEMBL" id="CHEMBL4523933"/>
<dbReference type="PaxDb" id="83332-Rv2906c"/>
<dbReference type="DNASU" id="888495"/>
<dbReference type="GeneID" id="888495"/>
<dbReference type="KEGG" id="mtu:Rv2906c"/>
<dbReference type="KEGG" id="mtv:RVBD_2906c"/>
<dbReference type="TubercuList" id="Rv2906c"/>
<dbReference type="eggNOG" id="COG0336">
    <property type="taxonomic scope" value="Bacteria"/>
</dbReference>
<dbReference type="InParanoid" id="P9WFY7"/>
<dbReference type="OrthoDB" id="9807416at2"/>
<dbReference type="PhylomeDB" id="P9WFY7"/>
<dbReference type="Proteomes" id="UP000001584">
    <property type="component" value="Chromosome"/>
</dbReference>
<dbReference type="GO" id="GO:0005829">
    <property type="term" value="C:cytosol"/>
    <property type="evidence" value="ECO:0000318"/>
    <property type="project" value="GO_Central"/>
</dbReference>
<dbReference type="GO" id="GO:0052906">
    <property type="term" value="F:tRNA (guanine(37)-N1)-methyltransferase activity"/>
    <property type="evidence" value="ECO:0000318"/>
    <property type="project" value="GO_Central"/>
</dbReference>
<dbReference type="GO" id="GO:0002939">
    <property type="term" value="P:tRNA N1-guanine methylation"/>
    <property type="evidence" value="ECO:0000318"/>
    <property type="project" value="GO_Central"/>
</dbReference>
<dbReference type="CDD" id="cd18080">
    <property type="entry name" value="TrmD-like"/>
    <property type="match status" value="1"/>
</dbReference>
<dbReference type="FunFam" id="1.10.1270.20:FF:000004">
    <property type="entry name" value="tRNA (guanine-N(1)-)-methyltransferase"/>
    <property type="match status" value="1"/>
</dbReference>
<dbReference type="FunFam" id="3.40.1280.10:FF:000001">
    <property type="entry name" value="tRNA (guanine-N(1)-)-methyltransferase"/>
    <property type="match status" value="1"/>
</dbReference>
<dbReference type="Gene3D" id="3.40.1280.10">
    <property type="match status" value="1"/>
</dbReference>
<dbReference type="Gene3D" id="1.10.1270.20">
    <property type="entry name" value="tRNA(m1g37)methyltransferase, domain 2"/>
    <property type="match status" value="1"/>
</dbReference>
<dbReference type="HAMAP" id="MF_00605">
    <property type="entry name" value="TrmD"/>
    <property type="match status" value="1"/>
</dbReference>
<dbReference type="InterPro" id="IPR029028">
    <property type="entry name" value="Alpha/beta_knot_MTases"/>
</dbReference>
<dbReference type="InterPro" id="IPR023148">
    <property type="entry name" value="tRNA_m1G_MeTrfase_C_sf"/>
</dbReference>
<dbReference type="InterPro" id="IPR002649">
    <property type="entry name" value="tRNA_m1G_MeTrfase_TrmD"/>
</dbReference>
<dbReference type="InterPro" id="IPR029026">
    <property type="entry name" value="tRNA_m1G_MTases_N"/>
</dbReference>
<dbReference type="InterPro" id="IPR016009">
    <property type="entry name" value="tRNA_MeTrfase_TRMD/TRM10"/>
</dbReference>
<dbReference type="NCBIfam" id="NF000648">
    <property type="entry name" value="PRK00026.1"/>
    <property type="match status" value="1"/>
</dbReference>
<dbReference type="NCBIfam" id="TIGR00088">
    <property type="entry name" value="trmD"/>
    <property type="match status" value="1"/>
</dbReference>
<dbReference type="PANTHER" id="PTHR46417">
    <property type="entry name" value="TRNA (GUANINE-N(1)-)-METHYLTRANSFERASE"/>
    <property type="match status" value="1"/>
</dbReference>
<dbReference type="PANTHER" id="PTHR46417:SF1">
    <property type="entry name" value="TRNA (GUANINE-N(1)-)-METHYLTRANSFERASE"/>
    <property type="match status" value="1"/>
</dbReference>
<dbReference type="Pfam" id="PF01746">
    <property type="entry name" value="tRNA_m1G_MT"/>
    <property type="match status" value="1"/>
</dbReference>
<dbReference type="PIRSF" id="PIRSF000386">
    <property type="entry name" value="tRNA_mtase"/>
    <property type="match status" value="1"/>
</dbReference>
<dbReference type="SUPFAM" id="SSF75217">
    <property type="entry name" value="alpha/beta knot"/>
    <property type="match status" value="1"/>
</dbReference>
<name>TRMD_MYCTU</name>
<comment type="function">
    <text evidence="1">Specifically methylates guanosine-37 in various tRNAs.</text>
</comment>
<comment type="catalytic activity">
    <reaction>
        <text>guanosine(37) in tRNA + S-adenosyl-L-methionine = N(1)-methylguanosine(37) in tRNA + S-adenosyl-L-homocysteine + H(+)</text>
        <dbReference type="Rhea" id="RHEA:36899"/>
        <dbReference type="Rhea" id="RHEA-COMP:10145"/>
        <dbReference type="Rhea" id="RHEA-COMP:10147"/>
        <dbReference type="ChEBI" id="CHEBI:15378"/>
        <dbReference type="ChEBI" id="CHEBI:57856"/>
        <dbReference type="ChEBI" id="CHEBI:59789"/>
        <dbReference type="ChEBI" id="CHEBI:73542"/>
        <dbReference type="ChEBI" id="CHEBI:74269"/>
        <dbReference type="EC" id="2.1.1.228"/>
    </reaction>
</comment>
<comment type="subunit">
    <text evidence="1">Homodimer.</text>
</comment>
<comment type="subcellular location">
    <subcellularLocation>
        <location evidence="2">Cytoplasm</location>
    </subcellularLocation>
</comment>
<comment type="miscellaneous">
    <text>Was identified as a high-confidence drug target.</text>
</comment>
<comment type="similarity">
    <text evidence="2">Belongs to the RNA methyltransferase TrmD family.</text>
</comment>
<feature type="chain" id="PRO_0000060410" description="tRNA (guanine-N(1)-)-methyltransferase">
    <location>
        <begin position="1"/>
        <end position="230"/>
    </location>
</feature>
<feature type="binding site" evidence="1">
    <location>
        <position position="109"/>
    </location>
    <ligand>
        <name>S-adenosyl-L-methionine</name>
        <dbReference type="ChEBI" id="CHEBI:59789"/>
    </ligand>
</feature>
<feature type="binding site" evidence="1">
    <location>
        <begin position="133"/>
        <end position="138"/>
    </location>
    <ligand>
        <name>S-adenosyl-L-methionine</name>
        <dbReference type="ChEBI" id="CHEBI:59789"/>
    </ligand>
</feature>
<feature type="strand" evidence="4">
    <location>
        <begin position="2"/>
        <end position="8"/>
    </location>
</feature>
<feature type="helix" evidence="4">
    <location>
        <begin position="10"/>
        <end position="17"/>
    </location>
</feature>
<feature type="helix" evidence="4">
    <location>
        <begin position="19"/>
        <end position="26"/>
    </location>
</feature>
<feature type="strand" evidence="4">
    <location>
        <begin position="31"/>
        <end position="36"/>
    </location>
</feature>
<feature type="helix" evidence="4">
    <location>
        <begin position="37"/>
        <end position="40"/>
    </location>
</feature>
<feature type="strand" evidence="6">
    <location>
        <begin position="43"/>
        <end position="45"/>
    </location>
</feature>
<feature type="helix" evidence="4">
    <location>
        <begin position="63"/>
        <end position="73"/>
    </location>
</feature>
<feature type="strand" evidence="4">
    <location>
        <begin position="79"/>
        <end position="83"/>
    </location>
</feature>
<feature type="strand" evidence="4">
    <location>
        <begin position="87"/>
        <end position="89"/>
    </location>
</feature>
<feature type="helix" evidence="4">
    <location>
        <begin position="92"/>
        <end position="98"/>
    </location>
</feature>
<feature type="strand" evidence="4">
    <location>
        <begin position="102"/>
        <end position="107"/>
    </location>
</feature>
<feature type="helix" evidence="4">
    <location>
        <begin position="117"/>
        <end position="122"/>
    </location>
</feature>
<feature type="turn" evidence="4">
    <location>
        <begin position="123"/>
        <end position="125"/>
    </location>
</feature>
<feature type="strand" evidence="4">
    <location>
        <begin position="126"/>
        <end position="136"/>
    </location>
</feature>
<feature type="strand" evidence="3">
    <location>
        <begin position="139"/>
        <end position="141"/>
    </location>
</feature>
<feature type="helix" evidence="4">
    <location>
        <begin position="142"/>
        <end position="159"/>
    </location>
</feature>
<feature type="strand" evidence="4">
    <location>
        <begin position="188"/>
        <end position="190"/>
    </location>
</feature>
<feature type="helix" evidence="4">
    <location>
        <begin position="197"/>
        <end position="200"/>
    </location>
</feature>
<feature type="helix" evidence="4">
    <location>
        <begin position="204"/>
        <end position="222"/>
    </location>
</feature>
<feature type="helix" evidence="5">
    <location>
        <begin position="224"/>
        <end position="226"/>
    </location>
</feature>
<evidence type="ECO:0000250" key="1"/>
<evidence type="ECO:0000305" key="2"/>
<evidence type="ECO:0007829" key="3">
    <source>
        <dbReference type="PDB" id="5ZHI"/>
    </source>
</evidence>
<evidence type="ECO:0007829" key="4">
    <source>
        <dbReference type="PDB" id="5ZHJ"/>
    </source>
</evidence>
<evidence type="ECO:0007829" key="5">
    <source>
        <dbReference type="PDB" id="5ZHL"/>
    </source>
</evidence>
<evidence type="ECO:0007829" key="6">
    <source>
        <dbReference type="PDB" id="6JOF"/>
    </source>
</evidence>
<keyword id="KW-0002">3D-structure</keyword>
<keyword id="KW-0963">Cytoplasm</keyword>
<keyword id="KW-0489">Methyltransferase</keyword>
<keyword id="KW-1185">Reference proteome</keyword>
<keyword id="KW-0949">S-adenosyl-L-methionine</keyword>
<keyword id="KW-0808">Transferase</keyword>
<keyword id="KW-0819">tRNA processing</keyword>
<proteinExistence type="evidence at protein level"/>